<protein>
    <recommendedName>
        <fullName>GrpE protein homolog, mitochondrial</fullName>
    </recommendedName>
</protein>
<feature type="transit peptide" description="Mitochondrion" evidence="2">
    <location>
        <begin position="1"/>
        <end status="unknown"/>
    </location>
</feature>
<feature type="chain" id="PRO_0000013040" description="GrpE protein homolog, mitochondrial">
    <location>
        <begin status="unknown"/>
        <end position="212"/>
    </location>
</feature>
<sequence length="212" mass="23297">MGPYLPAILRPIGRYATLYNVPRVAGQLRCYAADAKDAADAQGESAADPRVAELEKQLADKSKEAADLKDRLLRSVADFRNLQEVTRRDVQKARDFALQRFSKDLLESLDNFGHALGAVSPEALQRSPEIADLHAGVRLTRDVFEKTLLKHGIAPIDALGQPFDPNLHEATFELPQPDKTPGTVFHVQQPGYTLNGRVIRPAKVGVVKDPDA</sequence>
<evidence type="ECO:0000250" key="1"/>
<evidence type="ECO:0000255" key="2"/>
<evidence type="ECO:0000305" key="3"/>
<organism>
    <name type="scientific">Eremothecium gossypii (strain ATCC 10895 / CBS 109.51 / FGSC 9923 / NRRL Y-1056)</name>
    <name type="common">Yeast</name>
    <name type="synonym">Ashbya gossypii</name>
    <dbReference type="NCBI Taxonomy" id="284811"/>
    <lineage>
        <taxon>Eukaryota</taxon>
        <taxon>Fungi</taxon>
        <taxon>Dikarya</taxon>
        <taxon>Ascomycota</taxon>
        <taxon>Saccharomycotina</taxon>
        <taxon>Saccharomycetes</taxon>
        <taxon>Saccharomycetales</taxon>
        <taxon>Saccharomycetaceae</taxon>
        <taxon>Eremothecium</taxon>
    </lineage>
</organism>
<dbReference type="EMBL" id="AE016816">
    <property type="protein sequence ID" value="AAS51344.1"/>
    <property type="molecule type" value="Genomic_DNA"/>
</dbReference>
<dbReference type="RefSeq" id="NP_983520.1">
    <property type="nucleotide sequence ID" value="NM_208873.1"/>
</dbReference>
<dbReference type="SMR" id="Q75C01"/>
<dbReference type="FunCoup" id="Q75C01">
    <property type="interactions" value="896"/>
</dbReference>
<dbReference type="STRING" id="284811.Q75C01"/>
<dbReference type="EnsemblFungi" id="AAS51344">
    <property type="protein sequence ID" value="AAS51344"/>
    <property type="gene ID" value="AGOS_ACR118W"/>
</dbReference>
<dbReference type="GeneID" id="4619651"/>
<dbReference type="KEGG" id="ago:AGOS_ACR118W"/>
<dbReference type="eggNOG" id="KOG3003">
    <property type="taxonomic scope" value="Eukaryota"/>
</dbReference>
<dbReference type="HOGENOM" id="CLU_057217_0_1_1"/>
<dbReference type="InParanoid" id="Q75C01"/>
<dbReference type="OMA" id="PHRHQAI"/>
<dbReference type="OrthoDB" id="201635at2759"/>
<dbReference type="Proteomes" id="UP000000591">
    <property type="component" value="Chromosome III"/>
</dbReference>
<dbReference type="GO" id="GO:0001405">
    <property type="term" value="C:PAM complex, Tim23 associated import motor"/>
    <property type="evidence" value="ECO:0000318"/>
    <property type="project" value="GO_Central"/>
</dbReference>
<dbReference type="GO" id="GO:0000774">
    <property type="term" value="F:adenyl-nucleotide exchange factor activity"/>
    <property type="evidence" value="ECO:0000318"/>
    <property type="project" value="GO_Central"/>
</dbReference>
<dbReference type="GO" id="GO:0042803">
    <property type="term" value="F:protein homodimerization activity"/>
    <property type="evidence" value="ECO:0007669"/>
    <property type="project" value="InterPro"/>
</dbReference>
<dbReference type="GO" id="GO:0051087">
    <property type="term" value="F:protein-folding chaperone binding"/>
    <property type="evidence" value="ECO:0007669"/>
    <property type="project" value="InterPro"/>
</dbReference>
<dbReference type="GO" id="GO:0051082">
    <property type="term" value="F:unfolded protein binding"/>
    <property type="evidence" value="ECO:0000318"/>
    <property type="project" value="GO_Central"/>
</dbReference>
<dbReference type="GO" id="GO:0030150">
    <property type="term" value="P:protein import into mitochondrial matrix"/>
    <property type="evidence" value="ECO:0000318"/>
    <property type="project" value="GO_Central"/>
</dbReference>
<dbReference type="GO" id="GO:0042026">
    <property type="term" value="P:protein refolding"/>
    <property type="evidence" value="ECO:0007669"/>
    <property type="project" value="EnsemblFungi"/>
</dbReference>
<dbReference type="CDD" id="cd00446">
    <property type="entry name" value="GrpE"/>
    <property type="match status" value="1"/>
</dbReference>
<dbReference type="FunFam" id="2.30.22.10:FF:000002">
    <property type="entry name" value="GrpE protein homolog"/>
    <property type="match status" value="1"/>
</dbReference>
<dbReference type="FunFam" id="3.90.20.20:FF:000011">
    <property type="entry name" value="GrpE protein homolog"/>
    <property type="match status" value="1"/>
</dbReference>
<dbReference type="Gene3D" id="3.90.20.20">
    <property type="match status" value="1"/>
</dbReference>
<dbReference type="Gene3D" id="2.30.22.10">
    <property type="entry name" value="Head domain of nucleotide exchange factor GrpE"/>
    <property type="match status" value="1"/>
</dbReference>
<dbReference type="HAMAP" id="MF_01151">
    <property type="entry name" value="GrpE"/>
    <property type="match status" value="1"/>
</dbReference>
<dbReference type="InterPro" id="IPR000740">
    <property type="entry name" value="GrpE"/>
</dbReference>
<dbReference type="InterPro" id="IPR013805">
    <property type="entry name" value="GrpE_coiled_coil"/>
</dbReference>
<dbReference type="InterPro" id="IPR009012">
    <property type="entry name" value="GrpE_head"/>
</dbReference>
<dbReference type="PANTHER" id="PTHR21237">
    <property type="entry name" value="GRPE PROTEIN"/>
    <property type="match status" value="1"/>
</dbReference>
<dbReference type="PANTHER" id="PTHR21237:SF23">
    <property type="entry name" value="GRPE PROTEIN HOMOLOG, MITOCHONDRIAL"/>
    <property type="match status" value="1"/>
</dbReference>
<dbReference type="Pfam" id="PF01025">
    <property type="entry name" value="GrpE"/>
    <property type="match status" value="1"/>
</dbReference>
<dbReference type="PRINTS" id="PR00773">
    <property type="entry name" value="GRPEPROTEIN"/>
</dbReference>
<dbReference type="SUPFAM" id="SSF58014">
    <property type="entry name" value="Coiled-coil domain of nucleotide exchange factor GrpE"/>
    <property type="match status" value="1"/>
</dbReference>
<dbReference type="SUPFAM" id="SSF51064">
    <property type="entry name" value="Head domain of nucleotide exchange factor GrpE"/>
    <property type="match status" value="1"/>
</dbReference>
<dbReference type="PROSITE" id="PS01071">
    <property type="entry name" value="GRPE"/>
    <property type="match status" value="1"/>
</dbReference>
<comment type="function">
    <text evidence="1">Essential component of the PAM complex, a complex required for the translocation of transit peptide-containing proteins from the inner membrane into the mitochondrial matrix in an ATP-dependent manner. Seems to control the nucleotide-dependent binding of SSC1 to substrate proteins (By similarity).</text>
</comment>
<comment type="subunit">
    <text evidence="1">Component of the PAM complex, at least composed of mtHsp70, MGE1, TIM44, PAM16, PAM17 and PAM18.</text>
</comment>
<comment type="subcellular location">
    <subcellularLocation>
        <location evidence="1">Mitochondrion matrix</location>
    </subcellularLocation>
</comment>
<comment type="similarity">
    <text evidence="3">Belongs to the GrpE family.</text>
</comment>
<reference key="1">
    <citation type="journal article" date="2004" name="Science">
        <title>The Ashbya gossypii genome as a tool for mapping the ancient Saccharomyces cerevisiae genome.</title>
        <authorList>
            <person name="Dietrich F.S."/>
            <person name="Voegeli S."/>
            <person name="Brachat S."/>
            <person name="Lerch A."/>
            <person name="Gates K."/>
            <person name="Steiner S."/>
            <person name="Mohr C."/>
            <person name="Poehlmann R."/>
            <person name="Luedi P."/>
            <person name="Choi S."/>
            <person name="Wing R.A."/>
            <person name="Flavier A."/>
            <person name="Gaffney T.D."/>
            <person name="Philippsen P."/>
        </authorList>
    </citation>
    <scope>NUCLEOTIDE SEQUENCE [LARGE SCALE GENOMIC DNA]</scope>
    <source>
        <strain>ATCC 10895 / CBS 109.51 / FGSC 9923 / NRRL Y-1056</strain>
    </source>
</reference>
<reference key="2">
    <citation type="journal article" date="2013" name="G3 (Bethesda)">
        <title>Genomes of Ashbya fungi isolated from insects reveal four mating-type loci, numerous translocations, lack of transposons, and distinct gene duplications.</title>
        <authorList>
            <person name="Dietrich F.S."/>
            <person name="Voegeli S."/>
            <person name="Kuo S."/>
            <person name="Philippsen P."/>
        </authorList>
    </citation>
    <scope>GENOME REANNOTATION</scope>
    <source>
        <strain>ATCC 10895 / CBS 109.51 / FGSC 9923 / NRRL Y-1056</strain>
    </source>
</reference>
<keyword id="KW-0143">Chaperone</keyword>
<keyword id="KW-0496">Mitochondrion</keyword>
<keyword id="KW-1185">Reference proteome</keyword>
<keyword id="KW-0809">Transit peptide</keyword>
<proteinExistence type="inferred from homology"/>
<accession>Q75C01</accession>
<name>GRPE_EREGS</name>
<gene>
    <name type="primary">mge1</name>
    <name type="ordered locus">ACR118W</name>
</gene>